<proteinExistence type="inferred from homology"/>
<organism>
    <name type="scientific">Aeromonas hydrophila subsp. hydrophila (strain ATCC 7966 / DSM 30187 / BCRC 13018 / CCUG 14551 / JCM 1027 / KCTC 2358 / NCIMB 9240 / NCTC 8049)</name>
    <dbReference type="NCBI Taxonomy" id="380703"/>
    <lineage>
        <taxon>Bacteria</taxon>
        <taxon>Pseudomonadati</taxon>
        <taxon>Pseudomonadota</taxon>
        <taxon>Gammaproteobacteria</taxon>
        <taxon>Aeromonadales</taxon>
        <taxon>Aeromonadaceae</taxon>
        <taxon>Aeromonas</taxon>
    </lineage>
</organism>
<gene>
    <name evidence="1" type="primary">clpS</name>
    <name type="ordered locus">AHA_1856</name>
</gene>
<feature type="chain" id="PRO_0000300696" description="ATP-dependent Clp protease adapter protein ClpS">
    <location>
        <begin position="1"/>
        <end position="105"/>
    </location>
</feature>
<comment type="function">
    <text evidence="1">Involved in the modulation of the specificity of the ClpAP-mediated ATP-dependent protein degradation.</text>
</comment>
<comment type="subunit">
    <text evidence="1">Binds to the N-terminal domain of the chaperone ClpA.</text>
</comment>
<comment type="similarity">
    <text evidence="1">Belongs to the ClpS family.</text>
</comment>
<sequence>MSKQKELFANEEIAEAEKTKLQPPPMYKVVLNNDDYTPMEFVVEVLQKFFGMDLDKATQVMLSVHYSGKGVCGTFTAEIAETKVVQVNTYARNNEHPLLCTMEKA</sequence>
<protein>
    <recommendedName>
        <fullName evidence="1">ATP-dependent Clp protease adapter protein ClpS</fullName>
    </recommendedName>
</protein>
<evidence type="ECO:0000255" key="1">
    <source>
        <dbReference type="HAMAP-Rule" id="MF_00302"/>
    </source>
</evidence>
<keyword id="KW-1185">Reference proteome</keyword>
<accession>A0KJD6</accession>
<dbReference type="EMBL" id="CP000462">
    <property type="protein sequence ID" value="ABK38272.1"/>
    <property type="molecule type" value="Genomic_DNA"/>
</dbReference>
<dbReference type="RefSeq" id="WP_005300028.1">
    <property type="nucleotide sequence ID" value="NC_008570.1"/>
</dbReference>
<dbReference type="RefSeq" id="YP_856387.1">
    <property type="nucleotide sequence ID" value="NC_008570.1"/>
</dbReference>
<dbReference type="SMR" id="A0KJD6"/>
<dbReference type="STRING" id="380703.AHA_1856"/>
<dbReference type="EnsemblBacteria" id="ABK38272">
    <property type="protein sequence ID" value="ABK38272"/>
    <property type="gene ID" value="AHA_1856"/>
</dbReference>
<dbReference type="GeneID" id="47845821"/>
<dbReference type="KEGG" id="aha:AHA_1856"/>
<dbReference type="PATRIC" id="fig|380703.7.peg.1866"/>
<dbReference type="eggNOG" id="COG2127">
    <property type="taxonomic scope" value="Bacteria"/>
</dbReference>
<dbReference type="HOGENOM" id="CLU_134358_2_1_6"/>
<dbReference type="OrthoDB" id="9796121at2"/>
<dbReference type="PRO" id="PR:A0KJD6"/>
<dbReference type="Proteomes" id="UP000000756">
    <property type="component" value="Chromosome"/>
</dbReference>
<dbReference type="GO" id="GO:0030163">
    <property type="term" value="P:protein catabolic process"/>
    <property type="evidence" value="ECO:0007669"/>
    <property type="project" value="InterPro"/>
</dbReference>
<dbReference type="GO" id="GO:0006508">
    <property type="term" value="P:proteolysis"/>
    <property type="evidence" value="ECO:0007669"/>
    <property type="project" value="UniProtKB-UniRule"/>
</dbReference>
<dbReference type="FunFam" id="3.30.1390.10:FF:000002">
    <property type="entry name" value="ATP-dependent Clp protease adapter protein ClpS"/>
    <property type="match status" value="1"/>
</dbReference>
<dbReference type="Gene3D" id="3.30.1390.10">
    <property type="match status" value="1"/>
</dbReference>
<dbReference type="HAMAP" id="MF_00302">
    <property type="entry name" value="ClpS"/>
    <property type="match status" value="1"/>
</dbReference>
<dbReference type="InterPro" id="IPR022935">
    <property type="entry name" value="ClpS"/>
</dbReference>
<dbReference type="InterPro" id="IPR003769">
    <property type="entry name" value="ClpS_core"/>
</dbReference>
<dbReference type="InterPro" id="IPR014719">
    <property type="entry name" value="Ribosomal_bL12_C/ClpS-like"/>
</dbReference>
<dbReference type="NCBIfam" id="NF000669">
    <property type="entry name" value="PRK00033.1-2"/>
    <property type="match status" value="1"/>
</dbReference>
<dbReference type="NCBIfam" id="NF000670">
    <property type="entry name" value="PRK00033.1-3"/>
    <property type="match status" value="1"/>
</dbReference>
<dbReference type="NCBIfam" id="NF000672">
    <property type="entry name" value="PRK00033.1-5"/>
    <property type="match status" value="1"/>
</dbReference>
<dbReference type="PANTHER" id="PTHR33473:SF19">
    <property type="entry name" value="ATP-DEPENDENT CLP PROTEASE ADAPTER PROTEIN CLPS"/>
    <property type="match status" value="1"/>
</dbReference>
<dbReference type="PANTHER" id="PTHR33473">
    <property type="entry name" value="ATP-DEPENDENT CLP PROTEASE ADAPTER PROTEIN CLPS1, CHLOROPLASTIC"/>
    <property type="match status" value="1"/>
</dbReference>
<dbReference type="Pfam" id="PF02617">
    <property type="entry name" value="ClpS"/>
    <property type="match status" value="1"/>
</dbReference>
<dbReference type="SUPFAM" id="SSF54736">
    <property type="entry name" value="ClpS-like"/>
    <property type="match status" value="1"/>
</dbReference>
<reference key="1">
    <citation type="journal article" date="2006" name="J. Bacteriol.">
        <title>Genome sequence of Aeromonas hydrophila ATCC 7966T: jack of all trades.</title>
        <authorList>
            <person name="Seshadri R."/>
            <person name="Joseph S.W."/>
            <person name="Chopra A.K."/>
            <person name="Sha J."/>
            <person name="Shaw J."/>
            <person name="Graf J."/>
            <person name="Haft D.H."/>
            <person name="Wu M."/>
            <person name="Ren Q."/>
            <person name="Rosovitz M.J."/>
            <person name="Madupu R."/>
            <person name="Tallon L."/>
            <person name="Kim M."/>
            <person name="Jin S."/>
            <person name="Vuong H."/>
            <person name="Stine O.C."/>
            <person name="Ali A."/>
            <person name="Horneman A.J."/>
            <person name="Heidelberg J.F."/>
        </authorList>
    </citation>
    <scope>NUCLEOTIDE SEQUENCE [LARGE SCALE GENOMIC DNA]</scope>
    <source>
        <strain>ATCC 7966 / DSM 30187 / BCRC 13018 / CCUG 14551 / JCM 1027 / KCTC 2358 / NCIMB 9240 / NCTC 8049</strain>
    </source>
</reference>
<name>CLPS_AERHH</name>